<sequence length="350" mass="39572">MQLLKQNYKKYILDLNDAQFNRAVKPIIEQDYRINQIIEWIYAKKAVSFESFTNIPKELRNKLDEKFFLRTLKIVKKEKSLIDSTIRYTFRTADKKYFFAVFLPANGKNSVCISSQIGCPIMCAFCSSGKTKLARNLSRGEIIEQILQVENDTKEKISGILFMGMGEPMLNFNNLISVLNSLLSSKEFGIGKRHITVSSVGIVPAVKKLADDNFGVRLALSLHAVDERQRKKLVPDNLGFSIEDILKAGKYYLKKTNSHLTIEYVLVKGINISSADAHKLARLLKRCDLINSDVQVNLIPFNPVTDVQFQRPDKKSINKFKSILKLNGITVNVRQSKGANINAACGQLGY</sequence>
<accession>B1H070</accession>
<protein>
    <recommendedName>
        <fullName evidence="1">Probable dual-specificity RNA methyltransferase RlmN</fullName>
        <ecNumber evidence="1">2.1.1.192</ecNumber>
    </recommendedName>
    <alternativeName>
        <fullName evidence="1">23S rRNA (adenine(2503)-C(2))-methyltransferase</fullName>
    </alternativeName>
    <alternativeName>
        <fullName evidence="1">23S rRNA m2A2503 methyltransferase</fullName>
    </alternativeName>
    <alternativeName>
        <fullName evidence="1">Ribosomal RNA large subunit methyltransferase N</fullName>
    </alternativeName>
    <alternativeName>
        <fullName evidence="1">tRNA (adenine(37)-C(2))-methyltransferase</fullName>
    </alternativeName>
    <alternativeName>
        <fullName evidence="1">tRNA m2A37 methyltransferase</fullName>
    </alternativeName>
</protein>
<keyword id="KW-0004">4Fe-4S</keyword>
<keyword id="KW-0963">Cytoplasm</keyword>
<keyword id="KW-1015">Disulfide bond</keyword>
<keyword id="KW-0408">Iron</keyword>
<keyword id="KW-0411">Iron-sulfur</keyword>
<keyword id="KW-0479">Metal-binding</keyword>
<keyword id="KW-0489">Methyltransferase</keyword>
<keyword id="KW-0698">rRNA processing</keyword>
<keyword id="KW-0949">S-adenosyl-L-methionine</keyword>
<keyword id="KW-0808">Transferase</keyword>
<keyword id="KW-0819">tRNA processing</keyword>
<name>RLMN_ENDTX</name>
<organism>
    <name type="scientific">Endomicrobium trichonymphae</name>
    <dbReference type="NCBI Taxonomy" id="1408204"/>
    <lineage>
        <taxon>Bacteria</taxon>
        <taxon>Pseudomonadati</taxon>
        <taxon>Elusimicrobiota</taxon>
        <taxon>Endomicrobiia</taxon>
        <taxon>Endomicrobiales</taxon>
        <taxon>Endomicrobiaceae</taxon>
        <taxon>Candidatus Endomicrobiellum</taxon>
    </lineage>
</organism>
<dbReference type="EC" id="2.1.1.192" evidence="1"/>
<dbReference type="EMBL" id="AP009510">
    <property type="protein sequence ID" value="BAG13902.1"/>
    <property type="molecule type" value="Genomic_DNA"/>
</dbReference>
<dbReference type="RefSeq" id="WP_015423428.1">
    <property type="nucleotide sequence ID" value="NC_020419.1"/>
</dbReference>
<dbReference type="SMR" id="B1H070"/>
<dbReference type="STRING" id="471821.TGRD_419"/>
<dbReference type="KEGG" id="rsd:TGRD_419"/>
<dbReference type="PATRIC" id="fig|471821.5.peg.681"/>
<dbReference type="HOGENOM" id="CLU_029101_0_1_0"/>
<dbReference type="Proteomes" id="UP000001691">
    <property type="component" value="Chromosome"/>
</dbReference>
<dbReference type="GO" id="GO:0005737">
    <property type="term" value="C:cytoplasm"/>
    <property type="evidence" value="ECO:0007669"/>
    <property type="project" value="UniProtKB-SubCell"/>
</dbReference>
<dbReference type="GO" id="GO:0051539">
    <property type="term" value="F:4 iron, 4 sulfur cluster binding"/>
    <property type="evidence" value="ECO:0007669"/>
    <property type="project" value="UniProtKB-UniRule"/>
</dbReference>
<dbReference type="GO" id="GO:0046872">
    <property type="term" value="F:metal ion binding"/>
    <property type="evidence" value="ECO:0007669"/>
    <property type="project" value="UniProtKB-KW"/>
</dbReference>
<dbReference type="GO" id="GO:0070040">
    <property type="term" value="F:rRNA (adenine(2503)-C2-)-methyltransferase activity"/>
    <property type="evidence" value="ECO:0007669"/>
    <property type="project" value="UniProtKB-UniRule"/>
</dbReference>
<dbReference type="GO" id="GO:0019843">
    <property type="term" value="F:rRNA binding"/>
    <property type="evidence" value="ECO:0007669"/>
    <property type="project" value="UniProtKB-UniRule"/>
</dbReference>
<dbReference type="GO" id="GO:0002935">
    <property type="term" value="F:tRNA (adenine(37)-C2)-methyltransferase activity"/>
    <property type="evidence" value="ECO:0007669"/>
    <property type="project" value="UniProtKB-UniRule"/>
</dbReference>
<dbReference type="GO" id="GO:0000049">
    <property type="term" value="F:tRNA binding"/>
    <property type="evidence" value="ECO:0007669"/>
    <property type="project" value="UniProtKB-UniRule"/>
</dbReference>
<dbReference type="GO" id="GO:0070475">
    <property type="term" value="P:rRNA base methylation"/>
    <property type="evidence" value="ECO:0007669"/>
    <property type="project" value="UniProtKB-UniRule"/>
</dbReference>
<dbReference type="GO" id="GO:0030488">
    <property type="term" value="P:tRNA methylation"/>
    <property type="evidence" value="ECO:0007669"/>
    <property type="project" value="UniProtKB-UniRule"/>
</dbReference>
<dbReference type="CDD" id="cd01335">
    <property type="entry name" value="Radical_SAM"/>
    <property type="match status" value="1"/>
</dbReference>
<dbReference type="FunFam" id="3.20.20.70:FF:000014">
    <property type="entry name" value="Probable dual-specificity RNA methyltransferase RlmN"/>
    <property type="match status" value="1"/>
</dbReference>
<dbReference type="Gene3D" id="1.10.150.530">
    <property type="match status" value="1"/>
</dbReference>
<dbReference type="Gene3D" id="3.20.20.70">
    <property type="entry name" value="Aldolase class I"/>
    <property type="match status" value="1"/>
</dbReference>
<dbReference type="HAMAP" id="MF_01849">
    <property type="entry name" value="RNA_methyltr_RlmN"/>
    <property type="match status" value="1"/>
</dbReference>
<dbReference type="InterPro" id="IPR013785">
    <property type="entry name" value="Aldolase_TIM"/>
</dbReference>
<dbReference type="InterPro" id="IPR040072">
    <property type="entry name" value="Methyltransferase_A"/>
</dbReference>
<dbReference type="InterPro" id="IPR048641">
    <property type="entry name" value="RlmN_N"/>
</dbReference>
<dbReference type="InterPro" id="IPR027492">
    <property type="entry name" value="RNA_MTrfase_RlmN"/>
</dbReference>
<dbReference type="InterPro" id="IPR004383">
    <property type="entry name" value="rRNA_lsu_MTrfase_RlmN/Cfr"/>
</dbReference>
<dbReference type="InterPro" id="IPR007197">
    <property type="entry name" value="rSAM"/>
</dbReference>
<dbReference type="NCBIfam" id="TIGR00048">
    <property type="entry name" value="rRNA_mod_RlmN"/>
    <property type="match status" value="1"/>
</dbReference>
<dbReference type="PANTHER" id="PTHR30544">
    <property type="entry name" value="23S RRNA METHYLTRANSFERASE"/>
    <property type="match status" value="1"/>
</dbReference>
<dbReference type="PANTHER" id="PTHR30544:SF5">
    <property type="entry name" value="RADICAL SAM CORE DOMAIN-CONTAINING PROTEIN"/>
    <property type="match status" value="1"/>
</dbReference>
<dbReference type="Pfam" id="PF04055">
    <property type="entry name" value="Radical_SAM"/>
    <property type="match status" value="1"/>
</dbReference>
<dbReference type="Pfam" id="PF21016">
    <property type="entry name" value="RlmN_N"/>
    <property type="match status" value="1"/>
</dbReference>
<dbReference type="PIRSF" id="PIRSF006004">
    <property type="entry name" value="CHP00048"/>
    <property type="match status" value="1"/>
</dbReference>
<dbReference type="SFLD" id="SFLDG01062">
    <property type="entry name" value="methyltransferase_(Class_A)"/>
    <property type="match status" value="1"/>
</dbReference>
<dbReference type="SFLD" id="SFLDS00029">
    <property type="entry name" value="Radical_SAM"/>
    <property type="match status" value="1"/>
</dbReference>
<dbReference type="SUPFAM" id="SSF102114">
    <property type="entry name" value="Radical SAM enzymes"/>
    <property type="match status" value="1"/>
</dbReference>
<dbReference type="PROSITE" id="PS51918">
    <property type="entry name" value="RADICAL_SAM"/>
    <property type="match status" value="1"/>
</dbReference>
<proteinExistence type="inferred from homology"/>
<gene>
    <name evidence="1" type="primary">rlmN</name>
    <name type="ordered locus">TGRD_419</name>
</gene>
<reference key="1">
    <citation type="journal article" date="2008" name="Proc. Natl. Acad. Sci. U.S.A.">
        <title>Complete genome of the uncultured termite group 1 bacteria in a single host protist cell.</title>
        <authorList>
            <person name="Hongoh Y."/>
            <person name="Sharma V.K."/>
            <person name="Prakash T."/>
            <person name="Noda S."/>
            <person name="Taylor T.D."/>
            <person name="Kudo T."/>
            <person name="Sakaki Y."/>
            <person name="Toyoda A."/>
            <person name="Hattori M."/>
            <person name="Ohkuma M."/>
        </authorList>
    </citation>
    <scope>NUCLEOTIDE SEQUENCE [LARGE SCALE GENOMIC DNA]</scope>
</reference>
<evidence type="ECO:0000255" key="1">
    <source>
        <dbReference type="HAMAP-Rule" id="MF_01849"/>
    </source>
</evidence>
<evidence type="ECO:0000255" key="2">
    <source>
        <dbReference type="PROSITE-ProRule" id="PRU01266"/>
    </source>
</evidence>
<feature type="chain" id="PRO_0000350512" description="Probable dual-specificity RNA methyltransferase RlmN">
    <location>
        <begin position="1"/>
        <end position="350"/>
    </location>
</feature>
<feature type="domain" description="Radical SAM core" evidence="2">
    <location>
        <begin position="105"/>
        <end position="342"/>
    </location>
</feature>
<feature type="active site" description="S-methylcysteine intermediate" evidence="1">
    <location>
        <position position="345"/>
    </location>
</feature>
<feature type="binding site" evidence="1">
    <location>
        <position position="119"/>
    </location>
    <ligand>
        <name>[4Fe-4S] cluster</name>
        <dbReference type="ChEBI" id="CHEBI:49883"/>
        <note>4Fe-4S-S-AdoMet</note>
    </ligand>
</feature>
<feature type="binding site" evidence="1">
    <location>
        <position position="123"/>
    </location>
    <ligand>
        <name>[4Fe-4S] cluster</name>
        <dbReference type="ChEBI" id="CHEBI:49883"/>
        <note>4Fe-4S-S-AdoMet</note>
    </ligand>
</feature>
<feature type="binding site" evidence="1">
    <location>
        <position position="126"/>
    </location>
    <ligand>
        <name>[4Fe-4S] cluster</name>
        <dbReference type="ChEBI" id="CHEBI:49883"/>
        <note>4Fe-4S-S-AdoMet</note>
    </ligand>
</feature>
<feature type="binding site" evidence="1">
    <location>
        <begin position="166"/>
        <end position="167"/>
    </location>
    <ligand>
        <name>S-adenosyl-L-methionine</name>
        <dbReference type="ChEBI" id="CHEBI:59789"/>
    </ligand>
</feature>
<feature type="binding site" evidence="1">
    <location>
        <position position="198"/>
    </location>
    <ligand>
        <name>S-adenosyl-L-methionine</name>
        <dbReference type="ChEBI" id="CHEBI:59789"/>
    </ligand>
</feature>
<feature type="binding site" evidence="1">
    <location>
        <begin position="221"/>
        <end position="223"/>
    </location>
    <ligand>
        <name>S-adenosyl-L-methionine</name>
        <dbReference type="ChEBI" id="CHEBI:59789"/>
    </ligand>
</feature>
<feature type="binding site" evidence="1">
    <location>
        <position position="302"/>
    </location>
    <ligand>
        <name>S-adenosyl-L-methionine</name>
        <dbReference type="ChEBI" id="CHEBI:59789"/>
    </ligand>
</feature>
<feature type="disulfide bond" description="(transient)" evidence="1">
    <location>
        <begin position="112"/>
        <end position="345"/>
    </location>
</feature>
<comment type="function">
    <text evidence="1">Specifically methylates position 2 of adenine 2503 in 23S rRNA and position 2 of adenine 37 in tRNAs.</text>
</comment>
<comment type="catalytic activity">
    <reaction evidence="1">
        <text>adenosine(2503) in 23S rRNA + 2 reduced [2Fe-2S]-[ferredoxin] + 2 S-adenosyl-L-methionine = 2-methyladenosine(2503) in 23S rRNA + 5'-deoxyadenosine + L-methionine + 2 oxidized [2Fe-2S]-[ferredoxin] + S-adenosyl-L-homocysteine</text>
        <dbReference type="Rhea" id="RHEA:42916"/>
        <dbReference type="Rhea" id="RHEA-COMP:10000"/>
        <dbReference type="Rhea" id="RHEA-COMP:10001"/>
        <dbReference type="Rhea" id="RHEA-COMP:10152"/>
        <dbReference type="Rhea" id="RHEA-COMP:10282"/>
        <dbReference type="ChEBI" id="CHEBI:17319"/>
        <dbReference type="ChEBI" id="CHEBI:33737"/>
        <dbReference type="ChEBI" id="CHEBI:33738"/>
        <dbReference type="ChEBI" id="CHEBI:57844"/>
        <dbReference type="ChEBI" id="CHEBI:57856"/>
        <dbReference type="ChEBI" id="CHEBI:59789"/>
        <dbReference type="ChEBI" id="CHEBI:74411"/>
        <dbReference type="ChEBI" id="CHEBI:74497"/>
        <dbReference type="EC" id="2.1.1.192"/>
    </reaction>
</comment>
<comment type="catalytic activity">
    <reaction evidence="1">
        <text>adenosine(37) in tRNA + 2 reduced [2Fe-2S]-[ferredoxin] + 2 S-adenosyl-L-methionine = 2-methyladenosine(37) in tRNA + 5'-deoxyadenosine + L-methionine + 2 oxidized [2Fe-2S]-[ferredoxin] + S-adenosyl-L-homocysteine</text>
        <dbReference type="Rhea" id="RHEA:43332"/>
        <dbReference type="Rhea" id="RHEA-COMP:10000"/>
        <dbReference type="Rhea" id="RHEA-COMP:10001"/>
        <dbReference type="Rhea" id="RHEA-COMP:10162"/>
        <dbReference type="Rhea" id="RHEA-COMP:10485"/>
        <dbReference type="ChEBI" id="CHEBI:17319"/>
        <dbReference type="ChEBI" id="CHEBI:33737"/>
        <dbReference type="ChEBI" id="CHEBI:33738"/>
        <dbReference type="ChEBI" id="CHEBI:57844"/>
        <dbReference type="ChEBI" id="CHEBI:57856"/>
        <dbReference type="ChEBI" id="CHEBI:59789"/>
        <dbReference type="ChEBI" id="CHEBI:74411"/>
        <dbReference type="ChEBI" id="CHEBI:74497"/>
        <dbReference type="EC" id="2.1.1.192"/>
    </reaction>
</comment>
<comment type="cofactor">
    <cofactor evidence="1">
        <name>[4Fe-4S] cluster</name>
        <dbReference type="ChEBI" id="CHEBI:49883"/>
    </cofactor>
    <text evidence="1">Binds 1 [4Fe-4S] cluster. The cluster is coordinated with 3 cysteines and an exchangeable S-adenosyl-L-methionine.</text>
</comment>
<comment type="subcellular location">
    <subcellularLocation>
        <location evidence="1">Cytoplasm</location>
    </subcellularLocation>
</comment>
<comment type="miscellaneous">
    <text evidence="1">Reaction proceeds by a ping-pong mechanism involving intermediate methylation of a conserved cysteine residue.</text>
</comment>
<comment type="similarity">
    <text evidence="1">Belongs to the radical SAM superfamily. RlmN family.</text>
</comment>